<accession>Q7T6D2</accession>
<feature type="chain" id="PRO_0000441531" description="Genome polyprotein">
    <location>
        <begin position="1"/>
        <end position="3414"/>
    </location>
</feature>
<feature type="chain" id="PRO_0000441532" description="Capsid protein C" evidence="1">
    <location>
        <begin position="1"/>
        <end position="97"/>
    </location>
</feature>
<feature type="propeptide" id="PRO_0000441533" description="ER anchor for the capsid protein C, removed in mature form by serine protease NS3" evidence="1">
    <location>
        <begin position="98"/>
        <end position="116"/>
    </location>
</feature>
<feature type="chain" id="PRO_0000441534" description="Protein prM" evidence="2">
    <location>
        <begin position="117"/>
        <end position="280"/>
    </location>
</feature>
<feature type="chain" id="PRO_0000441535" description="Peptide pr" evidence="2">
    <location>
        <begin position="117"/>
        <end position="205"/>
    </location>
</feature>
<feature type="chain" id="PRO_0000441536" description="Small envelope protein M" evidence="2">
    <location>
        <begin position="206"/>
        <end position="280"/>
    </location>
</feature>
<feature type="chain" id="PRO_0000441537" description="Envelope protein E" evidence="2">
    <location>
        <begin position="281"/>
        <end position="776"/>
    </location>
</feature>
<feature type="chain" id="PRO_0000441538" description="Non-structural protein 1" evidence="1">
    <location>
        <begin position="777"/>
        <end position="1128"/>
    </location>
</feature>
<feature type="chain" id="PRO_0000441539" description="Non-structural protein 2A" evidence="2">
    <location>
        <begin position="1129"/>
        <end position="1358"/>
    </location>
</feature>
<feature type="chain" id="PRO_0000441540" description="Serine protease subunit NS2B" evidence="2">
    <location>
        <begin position="1359"/>
        <end position="1489"/>
    </location>
</feature>
<feature type="chain" id="PRO_0000441541" description="Serine protease NS3" evidence="1">
    <location>
        <begin position="1490"/>
        <end position="2110"/>
    </location>
</feature>
<feature type="chain" id="PRO_0000441542" description="Non-structural protein 4A" evidence="1">
    <location>
        <begin position="2111"/>
        <end position="2236"/>
    </location>
</feature>
<feature type="peptide" id="PRO_0000441543" description="Peptide 2k" evidence="1">
    <location>
        <begin position="2237"/>
        <end position="2259"/>
    </location>
</feature>
<feature type="chain" id="PRO_0000441544" description="Non-structural protein 4B" evidence="1">
    <location>
        <begin position="2260"/>
        <end position="2511"/>
    </location>
</feature>
<feature type="chain" id="PRO_0000441545" description="RNA-directed RNA polymerase NS5" evidence="1">
    <location>
        <begin position="2512"/>
        <end position="3414"/>
    </location>
</feature>
<feature type="topological domain" description="Cytoplasmic" evidence="10">
    <location>
        <begin position="1"/>
        <end position="98"/>
    </location>
</feature>
<feature type="transmembrane region" description="Helical" evidence="10">
    <location>
        <begin position="99"/>
        <end position="119"/>
    </location>
</feature>
<feature type="topological domain" description="Extracellular" evidence="10">
    <location>
        <begin position="120"/>
        <end position="242"/>
    </location>
</feature>
<feature type="transmembrane region" description="Helical" evidence="20">
    <location>
        <begin position="243"/>
        <end position="260"/>
    </location>
</feature>
<feature type="topological domain" description="Cytoplasmic" evidence="10">
    <location>
        <position position="261"/>
    </location>
</feature>
<feature type="transmembrane region" description="Helical" evidence="20">
    <location>
        <begin position="262"/>
        <end position="280"/>
    </location>
</feature>
<feature type="topological domain" description="Extracellular" evidence="10">
    <location>
        <begin position="281"/>
        <end position="727"/>
    </location>
</feature>
<feature type="transmembrane region" description="Helical" evidence="10">
    <location>
        <begin position="728"/>
        <end position="748"/>
    </location>
</feature>
<feature type="topological domain" description="Cytoplasmic" evidence="10">
    <location>
        <begin position="749"/>
        <end position="755"/>
    </location>
</feature>
<feature type="transmembrane region" description="Helical" evidence="20">
    <location>
        <begin position="756"/>
        <end position="776"/>
    </location>
</feature>
<feature type="topological domain" description="Extracellular" evidence="10">
    <location>
        <begin position="777"/>
        <end position="1132"/>
    </location>
</feature>
<feature type="transmembrane region" description="Helical" evidence="10">
    <location>
        <begin position="1133"/>
        <end position="1153"/>
    </location>
</feature>
<feature type="topological domain" description="Cytoplasmic" evidence="10">
    <location>
        <begin position="1154"/>
        <end position="1158"/>
    </location>
</feature>
<feature type="transmembrane region" description="Helical" evidence="10">
    <location>
        <begin position="1159"/>
        <end position="1179"/>
    </location>
</feature>
<feature type="topological domain" description="Lumenal" evidence="10">
    <location>
        <begin position="1180"/>
        <end position="1187"/>
    </location>
</feature>
<feature type="transmembrane region" description="Helical" evidence="10">
    <location>
        <begin position="1188"/>
        <end position="1208"/>
    </location>
</feature>
<feature type="topological domain" description="Cytoplasmic" evidence="10">
    <location>
        <begin position="1209"/>
        <end position="1236"/>
    </location>
</feature>
<feature type="transmembrane region" description="Helical" evidence="10">
    <location>
        <begin position="1237"/>
        <end position="1257"/>
    </location>
</feature>
<feature type="topological domain" description="Lumenal" evidence="10">
    <location>
        <begin position="1258"/>
        <end position="1293"/>
    </location>
</feature>
<feature type="transmembrane region" description="Helical" evidence="10">
    <location>
        <begin position="1294"/>
        <end position="1314"/>
    </location>
</feature>
<feature type="topological domain" description="Cytoplasmic" evidence="10">
    <location>
        <begin position="1315"/>
        <end position="1363"/>
    </location>
</feature>
<feature type="transmembrane region" description="Helical" evidence="10">
    <location>
        <begin position="1364"/>
        <end position="1381"/>
    </location>
</feature>
<feature type="topological domain" description="Lumenal" evidence="10">
    <location>
        <position position="1382"/>
    </location>
</feature>
<feature type="transmembrane region" description="Helical" evidence="10">
    <location>
        <begin position="1383"/>
        <end position="1403"/>
    </location>
</feature>
<feature type="topological domain" description="Cytoplasmic" evidence="10">
    <location>
        <begin position="1404"/>
        <end position="1454"/>
    </location>
</feature>
<feature type="intramembrane region" description="Helical" evidence="10">
    <location>
        <begin position="1455"/>
        <end position="1475"/>
    </location>
</feature>
<feature type="topological domain" description="Cytoplasmic" evidence="10">
    <location>
        <begin position="1476"/>
        <end position="2160"/>
    </location>
</feature>
<feature type="transmembrane region" description="Helical" evidence="10">
    <location>
        <begin position="2161"/>
        <end position="2181"/>
    </location>
</feature>
<feature type="topological domain" description="Lumenal" evidence="10">
    <location>
        <begin position="2182"/>
        <end position="2189"/>
    </location>
</feature>
<feature type="intramembrane region" description="Helical" evidence="10">
    <location>
        <begin position="2190"/>
        <end position="2210"/>
    </location>
</feature>
<feature type="topological domain" description="Lumenal" evidence="10">
    <location>
        <position position="2211"/>
    </location>
</feature>
<feature type="transmembrane region" description="Helical" evidence="10">
    <location>
        <begin position="2212"/>
        <end position="2232"/>
    </location>
</feature>
<feature type="topological domain" description="Cytoplasmic" evidence="10">
    <location>
        <begin position="2233"/>
        <end position="2244"/>
    </location>
</feature>
<feature type="transmembrane region" description="Helical" evidence="10">
    <location>
        <begin position="2245"/>
        <end position="2265"/>
    </location>
</feature>
<feature type="topological domain" description="Lumenal" evidence="10">
    <location>
        <begin position="2266"/>
        <end position="2299"/>
    </location>
</feature>
<feature type="intramembrane region" description="Helical" evidence="10">
    <location>
        <begin position="2300"/>
        <end position="2320"/>
    </location>
</feature>
<feature type="topological domain" description="Lumenal" evidence="10">
    <location>
        <begin position="2321"/>
        <end position="2343"/>
    </location>
</feature>
<feature type="intramembrane region" description="Helical" evidence="10">
    <location>
        <begin position="2344"/>
        <end position="2364"/>
    </location>
</feature>
<feature type="topological domain" description="Lumenal" evidence="10">
    <location>
        <begin position="2365"/>
        <end position="2368"/>
    </location>
</feature>
<feature type="transmembrane region" description="Helical" evidence="10">
    <location>
        <begin position="2369"/>
        <end position="2389"/>
    </location>
</feature>
<feature type="topological domain" description="Cytoplasmic" evidence="10">
    <location>
        <begin position="2390"/>
        <end position="2432"/>
    </location>
</feature>
<feature type="transmembrane region" description="Helical" evidence="10">
    <location>
        <begin position="2433"/>
        <end position="2453"/>
    </location>
</feature>
<feature type="topological domain" description="Lumenal" evidence="10">
    <location>
        <begin position="2454"/>
        <end position="2477"/>
    </location>
</feature>
<feature type="transmembrane region" description="Helical" evidence="10">
    <location>
        <begin position="2478"/>
        <end position="2498"/>
    </location>
</feature>
<feature type="topological domain" description="Cytoplasmic" evidence="10">
    <location>
        <begin position="2499"/>
        <end position="3414"/>
    </location>
</feature>
<feature type="domain" description="Peptidase S7" evidence="16">
    <location>
        <begin position="1490"/>
        <end position="1669"/>
    </location>
</feature>
<feature type="domain" description="Helicase ATP-binding" evidence="13">
    <location>
        <begin position="1675"/>
        <end position="1831"/>
    </location>
</feature>
<feature type="domain" description="Helicase C-terminal" evidence="14">
    <location>
        <begin position="1841"/>
        <end position="2000"/>
    </location>
</feature>
<feature type="domain" description="mRNA cap 0-1 NS5-type MT" evidence="17">
    <location>
        <begin position="2512"/>
        <end position="2776"/>
    </location>
</feature>
<feature type="domain" description="RdRp catalytic" evidence="12">
    <location>
        <begin position="3040"/>
        <end position="3189"/>
    </location>
</feature>
<feature type="region of interest" description="Disordered" evidence="18">
    <location>
        <begin position="1"/>
        <end position="27"/>
    </location>
</feature>
<feature type="region of interest" description="Fusion peptide" evidence="4">
    <location>
        <begin position="378"/>
        <end position="391"/>
    </location>
</feature>
<feature type="region of interest" description="Interacts with and activates NS3 protease" evidence="15">
    <location>
        <begin position="1410"/>
        <end position="1449"/>
    </location>
</feature>
<feature type="region of interest" description="Interaction with host SCRIB" evidence="6">
    <location>
        <begin position="2730"/>
        <end position="2734"/>
    </location>
</feature>
<feature type="short sequence motif" description="DEAH box" evidence="13">
    <location>
        <begin position="1779"/>
        <end position="1782"/>
    </location>
</feature>
<feature type="active site" description="Charge relay system; for serine protease NS3 activity" evidence="16">
    <location>
        <position position="1543"/>
    </location>
</feature>
<feature type="active site" description="Charge relay system; for serine protease NS3 activity" evidence="16">
    <location>
        <position position="1567"/>
    </location>
</feature>
<feature type="active site" description="Charge relay system; for serine protease NS3 activity" evidence="16">
    <location>
        <position position="1627"/>
    </location>
</feature>
<feature type="active site" description="For 2'-O-MTase activity" evidence="8">
    <location>
        <position position="2572"/>
    </location>
</feature>
<feature type="active site" description="For 2'-O-MTase activity" evidence="8">
    <location>
        <position position="2657"/>
    </location>
</feature>
<feature type="active site" description="For 2'-O-MTase activity" evidence="8">
    <location>
        <position position="2694"/>
    </location>
</feature>
<feature type="active site" description="For 2'-O-MTase activity" evidence="8">
    <location>
        <position position="2730"/>
    </location>
</feature>
<feature type="binding site" evidence="13">
    <location>
        <begin position="1688"/>
        <end position="1695"/>
    </location>
    <ligand>
        <name>ATP</name>
        <dbReference type="ChEBI" id="CHEBI:30616"/>
    </ligand>
</feature>
<feature type="binding site" evidence="17">
    <location>
        <position position="2567"/>
    </location>
    <ligand>
        <name>S-adenosyl-L-methionine</name>
        <dbReference type="ChEBI" id="CHEBI:59789"/>
    </ligand>
</feature>
<feature type="binding site" evidence="17">
    <location>
        <position position="2597"/>
    </location>
    <ligand>
        <name>S-adenosyl-L-methionine</name>
        <dbReference type="ChEBI" id="CHEBI:59789"/>
    </ligand>
</feature>
<feature type="binding site" evidence="17">
    <location>
        <position position="2598"/>
    </location>
    <ligand>
        <name>S-adenosyl-L-methionine</name>
        <dbReference type="ChEBI" id="CHEBI:59789"/>
    </ligand>
</feature>
<feature type="binding site" evidence="17">
    <location>
        <position position="2615"/>
    </location>
    <ligand>
        <name>S-adenosyl-L-methionine</name>
        <dbReference type="ChEBI" id="CHEBI:59789"/>
    </ligand>
</feature>
<feature type="binding site" evidence="17">
    <location>
        <position position="2616"/>
    </location>
    <ligand>
        <name>S-adenosyl-L-methionine</name>
        <dbReference type="ChEBI" id="CHEBI:59789"/>
    </ligand>
</feature>
<feature type="binding site" evidence="17">
    <location>
        <position position="2643"/>
    </location>
    <ligand>
        <name>S-adenosyl-L-methionine</name>
        <dbReference type="ChEBI" id="CHEBI:59789"/>
    </ligand>
</feature>
<feature type="binding site" evidence="17">
    <location>
        <position position="2658"/>
    </location>
    <ligand>
        <name>S-adenosyl-L-methionine</name>
        <dbReference type="ChEBI" id="CHEBI:59789"/>
    </ligand>
</feature>
<feature type="binding site" evidence="17">
    <location>
        <position position="2732"/>
    </location>
    <ligand>
        <name>S-adenosyl-L-methionine</name>
        <dbReference type="ChEBI" id="CHEBI:59789"/>
    </ligand>
</feature>
<feature type="binding site" evidence="3">
    <location>
        <position position="2950"/>
    </location>
    <ligand>
        <name>Zn(2+)</name>
        <dbReference type="ChEBI" id="CHEBI:29105"/>
        <label>1</label>
    </ligand>
</feature>
<feature type="binding site" evidence="3">
    <location>
        <position position="2954"/>
    </location>
    <ligand>
        <name>Zn(2+)</name>
        <dbReference type="ChEBI" id="CHEBI:29105"/>
        <label>1</label>
    </ligand>
</feature>
<feature type="binding site" evidence="3">
    <location>
        <position position="2959"/>
    </location>
    <ligand>
        <name>Zn(2+)</name>
        <dbReference type="ChEBI" id="CHEBI:29105"/>
        <label>1</label>
    </ligand>
</feature>
<feature type="binding site" evidence="3">
    <location>
        <position position="2962"/>
    </location>
    <ligand>
        <name>Zn(2+)</name>
        <dbReference type="ChEBI" id="CHEBI:29105"/>
        <label>1</label>
    </ligand>
</feature>
<feature type="binding site" evidence="3">
    <location>
        <position position="3224"/>
    </location>
    <ligand>
        <name>Zn(2+)</name>
        <dbReference type="ChEBI" id="CHEBI:29105"/>
        <label>2</label>
    </ligand>
</feature>
<feature type="binding site" evidence="3">
    <location>
        <position position="3240"/>
    </location>
    <ligand>
        <name>Zn(2+)</name>
        <dbReference type="ChEBI" id="CHEBI:29105"/>
        <label>2</label>
    </ligand>
</feature>
<feature type="binding site" evidence="3">
    <location>
        <position position="3359"/>
    </location>
    <ligand>
        <name>Zn(2+)</name>
        <dbReference type="ChEBI" id="CHEBI:29105"/>
        <label>2</label>
    </ligand>
</feature>
<feature type="site" description="Cleavage; by viral protease NS3" evidence="1">
    <location>
        <begin position="96"/>
        <end position="97"/>
    </location>
</feature>
<feature type="site" description="Cleavage; by host signal peptidase" evidence="1">
    <location>
        <begin position="117"/>
        <end position="118"/>
    </location>
</feature>
<feature type="site" description="Cleavage; by host furin" evidence="2">
    <location>
        <begin position="205"/>
        <end position="206"/>
    </location>
</feature>
<feature type="site" description="Cleavage; by host signal peptidase" evidence="2">
    <location>
        <begin position="280"/>
        <end position="281"/>
    </location>
</feature>
<feature type="site" description="Cleavage; by host signal peptidase" evidence="1">
    <location>
        <begin position="776"/>
        <end position="777"/>
    </location>
</feature>
<feature type="site" description="Cleavage; by host" evidence="2">
    <location>
        <begin position="1128"/>
        <end position="1129"/>
    </location>
</feature>
<feature type="site" description="Cleavage; by viral protease NS3" evidence="2">
    <location>
        <begin position="1358"/>
        <end position="1359"/>
    </location>
</feature>
<feature type="site" description="Cleavage; by autolysis" evidence="1">
    <location>
        <begin position="1489"/>
        <end position="1490"/>
    </location>
</feature>
<feature type="site" description="Involved in NS3 ATPase and RTPase activities" evidence="3">
    <location>
        <position position="1949"/>
    </location>
</feature>
<feature type="site" description="Involved in NS3 ATPase and RTPase activities" evidence="3">
    <location>
        <position position="1952"/>
    </location>
</feature>
<feature type="site" description="Cleavage; by autolysis" evidence="1">
    <location>
        <begin position="2110"/>
        <end position="2111"/>
    </location>
</feature>
<feature type="site" description="Cleavage; by viral protease NS3" evidence="1">
    <location>
        <begin position="2236"/>
        <end position="2237"/>
    </location>
</feature>
<feature type="site" description="Cleavage; by host signal peptidase" evidence="1">
    <location>
        <begin position="2259"/>
        <end position="2260"/>
    </location>
</feature>
<feature type="site" description="Cleavage; by viral protease NS3" evidence="1">
    <location>
        <begin position="2511"/>
        <end position="2512"/>
    </location>
</feature>
<feature type="site" description="mRNA cap binding" evidence="17">
    <location>
        <position position="2524"/>
    </location>
</feature>
<feature type="site" description="mRNA cap binding; via carbonyl oxygen" evidence="17">
    <location>
        <position position="2527"/>
    </location>
</feature>
<feature type="site" description="mRNA cap binding" evidence="17">
    <location>
        <position position="2528"/>
    </location>
</feature>
<feature type="site" description="mRNA cap binding; via carbonyl oxygen" evidence="17">
    <location>
        <position position="2530"/>
    </location>
</feature>
<feature type="site" description="mRNA cap binding" evidence="17">
    <location>
        <position position="2535"/>
    </location>
</feature>
<feature type="site" description="mRNA cap binding" evidence="17">
    <location>
        <position position="2539"/>
    </location>
</feature>
<feature type="site" description="Essential for 2'-O-methyltransferase activity" evidence="17">
    <location>
        <position position="2572"/>
    </location>
</feature>
<feature type="site" description="Essential for 2'-O-methyltransferase and N-7 methyltransferase activity" evidence="17">
    <location>
        <position position="2657"/>
    </location>
</feature>
<feature type="site" description="mRNA cap binding" evidence="17">
    <location>
        <position position="2661"/>
    </location>
</feature>
<feature type="site" description="Essential for 2'-O-methyltransferase activity" evidence="17">
    <location>
        <position position="2694"/>
    </location>
</feature>
<feature type="site" description="mRNA cap binding" evidence="17">
    <location>
        <position position="2725"/>
    </location>
</feature>
<feature type="site" description="mRNA cap binding" evidence="17">
    <location>
        <position position="2727"/>
    </location>
</feature>
<feature type="site" description="Essential for 2'-O-methyltransferase activity" evidence="17">
    <location>
        <position position="2730"/>
    </location>
</feature>
<feature type="modified residue" description="N6-acetyllysine; by host" evidence="7">
    <location>
        <position position="1883"/>
    </location>
</feature>
<feature type="modified residue" description="Phosphoserine" evidence="1">
    <location>
        <position position="2567"/>
    </location>
</feature>
<feature type="glycosylation site" description="N-linked (GlcNAc...) asparagine; by host" evidence="11">
    <location>
        <position position="144"/>
    </location>
</feature>
<feature type="glycosylation site" description="N-linked (GlcNAc...) asparagine; by host" evidence="11">
    <location>
        <position position="434"/>
    </location>
</feature>
<feature type="glycosylation site" description="N-linked (GlcNAc...) asparagine; by host" evidence="11">
    <location>
        <position position="861"/>
    </location>
</feature>
<feature type="glycosylation site" description="N-linked (GlcNAc...) asparagine; by host" evidence="11">
    <location>
        <position position="983"/>
    </location>
</feature>
<feature type="glycosylation site" description="N-linked (GlcNAc...) asparagine; by host" evidence="11">
    <location>
        <position position="999"/>
    </location>
</feature>
<feature type="disulfide bond" evidence="2">
    <location>
        <begin position="283"/>
        <end position="310"/>
    </location>
</feature>
<feature type="disulfide bond" evidence="5">
    <location>
        <begin position="340"/>
        <end position="401"/>
    </location>
</feature>
<feature type="disulfide bond" evidence="2">
    <location>
        <begin position="340"/>
        <end position="396"/>
    </location>
</feature>
<feature type="disulfide bond" evidence="2">
    <location>
        <begin position="354"/>
        <end position="385"/>
    </location>
</feature>
<feature type="disulfide bond" evidence="2">
    <location>
        <begin position="372"/>
        <end position="401"/>
    </location>
</feature>
<feature type="disulfide bond" evidence="5">
    <location>
        <begin position="372"/>
        <end position="396"/>
    </location>
</feature>
<feature type="disulfide bond" evidence="2">
    <location>
        <begin position="466"/>
        <end position="570"/>
    </location>
</feature>
<feature type="disulfide bond" evidence="2">
    <location>
        <begin position="587"/>
        <end position="618"/>
    </location>
</feature>
<feature type="disulfide bond" evidence="5">
    <location>
        <begin position="780"/>
        <end position="791"/>
    </location>
</feature>
<feature type="disulfide bond" evidence="5">
    <location>
        <begin position="831"/>
        <end position="920"/>
    </location>
</feature>
<feature type="disulfide bond" evidence="5">
    <location>
        <begin position="955"/>
        <end position="1000"/>
    </location>
</feature>
<feature type="disulfide bond" evidence="5">
    <location>
        <begin position="1057"/>
        <end position="1106"/>
    </location>
</feature>
<feature type="disulfide bond" evidence="5">
    <location>
        <begin position="1068"/>
        <end position="1090"/>
    </location>
</feature>
<feature type="disulfide bond" evidence="5">
    <location>
        <begin position="1089"/>
        <end position="1093"/>
    </location>
</feature>
<feature type="mutagenesis site" description="Reduced viral replication." evidence="19">
    <original>L</original>
    <variation>H</variation>
    <location>
        <position position="1174"/>
    </location>
</feature>
<feature type="mutagenesis site" description="Reduced viral replication." evidence="19">
    <original>L</original>
    <variation>P</variation>
    <location>
        <position position="2576"/>
    </location>
</feature>
<feature type="mutagenesis site" description="Reduced viral replication." evidence="19">
    <original>D</original>
    <variation>G</variation>
    <location>
        <position position="3347"/>
    </location>
</feature>
<protein>
    <recommendedName>
        <fullName>Genome polyprotein</fullName>
    </recommendedName>
    <component>
        <recommendedName>
            <fullName>Capsid protein C</fullName>
        </recommendedName>
        <alternativeName>
            <fullName>Core protein</fullName>
        </alternativeName>
    </component>
    <component>
        <recommendedName>
            <fullName>Protein prM</fullName>
        </recommendedName>
    </component>
    <component>
        <recommendedName>
            <fullName>Peptide pr</fullName>
        </recommendedName>
    </component>
    <component>
        <recommendedName>
            <fullName>Small envelope protein M</fullName>
        </recommendedName>
        <alternativeName>
            <fullName>Matrix protein</fullName>
        </alternativeName>
    </component>
    <component>
        <recommendedName>
            <fullName>Envelope protein E</fullName>
        </recommendedName>
    </component>
    <component>
        <recommendedName>
            <fullName>Non-structural protein 1</fullName>
            <shortName>NS1</shortName>
        </recommendedName>
    </component>
    <component>
        <recommendedName>
            <fullName>Non-structural protein 2A</fullName>
            <shortName>NS2A</shortName>
        </recommendedName>
    </component>
    <component>
        <recommendedName>
            <fullName>Serine protease subunit NS2B</fullName>
        </recommendedName>
        <alternativeName>
            <fullName>Flavivirin protease NS2B regulatory subunit</fullName>
        </alternativeName>
        <alternativeName>
            <fullName>Non-structural protein 2B</fullName>
        </alternativeName>
    </component>
    <component>
        <recommendedName>
            <fullName>Serine protease NS3</fullName>
            <ecNumber>3.4.21.91</ecNumber>
            <ecNumber>3.6.1.15</ecNumber>
            <ecNumber>3.6.4.13</ecNumber>
        </recommendedName>
        <alternativeName>
            <fullName>Flavivirin protease NS3 catalytic subunit</fullName>
        </alternativeName>
        <alternativeName>
            <fullName>Non-structural protein 3</fullName>
        </alternativeName>
    </component>
    <component>
        <recommendedName>
            <fullName>Non-structural protein 4A</fullName>
            <shortName>NS4A</shortName>
        </recommendedName>
    </component>
    <component>
        <recommendedName>
            <fullName>Peptide 2k</fullName>
        </recommendedName>
    </component>
    <component>
        <recommendedName>
            <fullName>Non-structural protein 4B</fullName>
            <shortName>NS4B</shortName>
        </recommendedName>
    </component>
    <component>
        <recommendedName>
            <fullName>RNA-directed RNA polymerase NS5</fullName>
            <ecNumber evidence="17">2.1.1.56</ecNumber>
            <ecNumber evidence="17">2.1.1.57</ecNumber>
            <ecNumber evidence="12">2.7.7.48</ecNumber>
        </recommendedName>
        <alternativeName>
            <fullName>Non-structural protein 5</fullName>
        </alternativeName>
    </component>
</protein>
<organismHost>
    <name type="scientific">Homo sapiens</name>
    <name type="common">Human</name>
    <dbReference type="NCBI Taxonomy" id="9606"/>
</organismHost>
<comment type="function">
    <molecule>Capsid protein C</molecule>
    <text evidence="5">Plays a role in virus budding by binding to the cell membrane and gathering the viral RNA into a nucleocapsid that forms the core of a mature virus particle. During virus entry, may induce genome penetration into the host cytoplasm after hemifusion induced by the surface proteins. Can migrate to the cell nucleus where it modulates host functions.</text>
</comment>
<comment type="function">
    <molecule>Capsid protein C</molecule>
    <text evidence="1">Inhibits RNA silencing by interfering with host Dicer.</text>
</comment>
<comment type="function">
    <molecule>Peptide pr</molecule>
    <text evidence="5">Prevents premature fusion activity of envelope proteins in trans-Golgi by binding to envelope protein E at pH6.0. After virion release in extracellular space, gets dissociated from E dimers.</text>
</comment>
<comment type="function">
    <molecule>Protein prM</molecule>
    <text evidence="5">Acts as a chaperone for envelope protein E during intracellular virion assembly by masking and inactivating envelope protein E fusion peptide. prM is the only viral peptide matured by host furin in the trans-Golgi network probably to avoid catastrophic activation of the viral fusion activity in acidic Golgi compartment prior to virion release. prM-E cleavage is inefficient, and many virions are only partially matured. These uncleaved prM would play a role in immune evasion.</text>
</comment>
<comment type="function">
    <molecule>Small envelope protein M</molecule>
    <text evidence="5">May play a role in virus budding. Exerts cytotoxic effects by activating a mitochondrial apoptotic pathway through M ectodomain. May display a viroporin activity.</text>
</comment>
<comment type="function">
    <molecule>Envelope protein E</molecule>
    <text evidence="5">Binds to host cell surface receptor and mediates fusion between viral and cellular membranes. Envelope protein is synthesized in the endoplasmic reticulum in the form of heterodimer with protein prM. They play a role in virion budding in the ER, and the newly formed immature particle is covered with 60 spikes composed of heterodimer between precursor prM and envelope protein E. The virion is transported to the Golgi apparatus where the low pH causes dissociation of PrM-E heterodimers and formation of E homodimers. prM-E cleavage is inefficient, and many virions are only partially matured. These uncleaved prM would play a role in immune evasion.</text>
</comment>
<comment type="function">
    <molecule>Non-structural protein 1</molecule>
    <text evidence="9">Involved in immune evasion, pathogenesis and viral replication. Once cleaved off the polyprotein, is targeted to three destinations: the viral replication cycle, the plasma membrane and the extracellular compartment. Essential for viral replication. Required for formation of the replication complex and recruitment of other non-structural proteins to the ER-derived membrane structures. Excreted as a hexameric lipoparticle that plays a role against host immune response. Antagonizing the complement function. Binds to the host macrophages and dendritic cells. Inhibits signal transduction originating from Toll-like receptor 3 (TLR3).</text>
</comment>
<comment type="function">
    <molecule>Non-structural protein 2A</molecule>
    <text evidence="5">Component of the viral RNA replication complex that functions in virion assembly and antagonizes the host immune response.</text>
</comment>
<comment type="function">
    <molecule>Serine protease subunit NS2B</molecule>
    <text evidence="5 15">Required cofactor for the serine protease function of NS3. May have membrane-destabilizing activity and form viroporins (By similarity).</text>
</comment>
<comment type="function">
    <molecule>Serine protease NS3</molecule>
    <text evidence="16">Displays three enzymatic activities: serine protease, NTPase and RNA helicase. NS3 serine protease, in association with NS2B, performs its autocleavage and cleaves the polyprotein at dibasic sites in the cytoplasm: C-prM, NS2A-NS2B, NS2B-NS3, NS3-NS4A, NS4A-2K and NS4B-NS5. NS3 RNA helicase binds RNA and unwinds dsRNA in the 3' to 5' direction.</text>
</comment>
<comment type="function">
    <molecule>Non-structural protein 4A</molecule>
    <text evidence="9">Regulates the ATPase activity of the NS3 helicase activity. NS4A allows NS3 helicase to conserve energy during unwinding.</text>
</comment>
<comment type="function">
    <molecule>Peptide 2k</molecule>
    <text evidence="5">Functions as a signal peptide for NS4B and is required for the interferon antagonism activity of the latter.</text>
</comment>
<comment type="function">
    <molecule>Non-structural protein 4B</molecule>
    <text evidence="9">Induces the formation of ER-derived membrane vesicles where the viral replication takes place. Inhibits interferon (IFN)-induced host STAT1 phosphorylation and nuclear translocation, thereby preventing the establishment of cellular antiviral state by blocking the IFN-alpha/beta pathway. Inhibits STAT2 translocation in the nucleus after IFN-alpha treatment.</text>
</comment>
<comment type="function">
    <molecule>RNA-directed RNA polymerase NS5</molecule>
    <text evidence="5">Replicates the viral (+) and (-) RNA genome, and performs the capping of genomes in the cytoplasm. NS5 methylates viral RNA cap at guanine N-7 and ribose 2'-O positions. Besides its role in RNA genome replication, also prevents the establishment of cellular antiviral state by blocking the interferon-alpha/beta (IFN-alpha/beta) signaling pathway. Inhibits host TYK2 and STAT2 phosphorylation, thereby preventing activation of JAK-STAT signaling pathway.</text>
</comment>
<comment type="catalytic activity">
    <reaction>
        <text>Selective hydrolysis of -Xaa-Xaa-|-Yaa- bonds in which each of the Xaa can be either Arg or Lys and Yaa can be either Ser or Ala.</text>
        <dbReference type="EC" id="3.4.21.91"/>
    </reaction>
</comment>
<comment type="catalytic activity">
    <reaction evidence="12">
        <text>RNA(n) + a ribonucleoside 5'-triphosphate = RNA(n+1) + diphosphate</text>
        <dbReference type="Rhea" id="RHEA:21248"/>
        <dbReference type="Rhea" id="RHEA-COMP:14527"/>
        <dbReference type="Rhea" id="RHEA-COMP:17342"/>
        <dbReference type="ChEBI" id="CHEBI:33019"/>
        <dbReference type="ChEBI" id="CHEBI:61557"/>
        <dbReference type="ChEBI" id="CHEBI:140395"/>
        <dbReference type="EC" id="2.7.7.48"/>
    </reaction>
</comment>
<comment type="catalytic activity">
    <reaction>
        <text>a ribonucleoside 5'-triphosphate + H2O = a ribonucleoside 5'-diphosphate + phosphate + H(+)</text>
        <dbReference type="Rhea" id="RHEA:23680"/>
        <dbReference type="ChEBI" id="CHEBI:15377"/>
        <dbReference type="ChEBI" id="CHEBI:15378"/>
        <dbReference type="ChEBI" id="CHEBI:43474"/>
        <dbReference type="ChEBI" id="CHEBI:57930"/>
        <dbReference type="ChEBI" id="CHEBI:61557"/>
        <dbReference type="EC" id="3.6.1.15"/>
    </reaction>
</comment>
<comment type="catalytic activity">
    <reaction>
        <text>ATP + H2O = ADP + phosphate + H(+)</text>
        <dbReference type="Rhea" id="RHEA:13065"/>
        <dbReference type="ChEBI" id="CHEBI:15377"/>
        <dbReference type="ChEBI" id="CHEBI:15378"/>
        <dbReference type="ChEBI" id="CHEBI:30616"/>
        <dbReference type="ChEBI" id="CHEBI:43474"/>
        <dbReference type="ChEBI" id="CHEBI:456216"/>
        <dbReference type="EC" id="3.6.4.13"/>
    </reaction>
</comment>
<comment type="catalytic activity">
    <reaction evidence="17">
        <text>a 5'-end (5'-triphosphoguanosine)-ribonucleoside in mRNA + S-adenosyl-L-methionine = a 5'-end (N(7)-methyl 5'-triphosphoguanosine)-ribonucleoside in mRNA + S-adenosyl-L-homocysteine</text>
        <dbReference type="Rhea" id="RHEA:67008"/>
        <dbReference type="Rhea" id="RHEA-COMP:17166"/>
        <dbReference type="Rhea" id="RHEA-COMP:17167"/>
        <dbReference type="ChEBI" id="CHEBI:57856"/>
        <dbReference type="ChEBI" id="CHEBI:59789"/>
        <dbReference type="ChEBI" id="CHEBI:156461"/>
        <dbReference type="ChEBI" id="CHEBI:167617"/>
        <dbReference type="EC" id="2.1.1.56"/>
    </reaction>
</comment>
<comment type="catalytic activity">
    <reaction evidence="17">
        <text>a 5'-end (N(7)-methyl 5'-triphosphoguanosine)-ribonucleoside in mRNA + S-adenosyl-L-methionine = a 5'-end (N(7)-methyl 5'-triphosphoguanosine)-(2'-O-methyl-ribonucleoside) in mRNA + S-adenosyl-L-homocysteine + H(+)</text>
        <dbReference type="Rhea" id="RHEA:67020"/>
        <dbReference type="Rhea" id="RHEA-COMP:17167"/>
        <dbReference type="Rhea" id="RHEA-COMP:17168"/>
        <dbReference type="ChEBI" id="CHEBI:15378"/>
        <dbReference type="ChEBI" id="CHEBI:57856"/>
        <dbReference type="ChEBI" id="CHEBI:59789"/>
        <dbReference type="ChEBI" id="CHEBI:156461"/>
        <dbReference type="ChEBI" id="CHEBI:167609"/>
        <dbReference type="EC" id="2.1.1.57"/>
    </reaction>
</comment>
<comment type="subunit">
    <molecule>Capsid protein C</molecule>
    <text evidence="5">Homodimer.</text>
</comment>
<comment type="subunit">
    <molecule>Protein prM</molecule>
    <text evidence="5">Forms heterodimers with envelope protein E in the endoplasmic reticulum and Golgi.</text>
</comment>
<comment type="subunit">
    <molecule>Envelope protein E</molecule>
    <text evidence="5">Homodimer; in the endoplasmic reticulum and Golgi.</text>
</comment>
<comment type="subunit">
    <molecule>Non-structural protein 1</molecule>
    <text evidence="5">Forms homodimers as well as homohexamers. NS1 may interact with NS4A.</text>
</comment>
<comment type="subunit">
    <molecule>Serine protease subunit NS2B</molecule>
    <text evidence="5">Forms a heterodimer with serine protease NS3. May form homooligomers.</text>
</comment>
<comment type="subunit">
    <molecule>Serine protease NS3</molecule>
    <text evidence="5">Forms a heterodimer with NS2B. Interacts with NS4B. Interacts with unphosphorylated RNA-directed RNA polymerase NS5; this interaction stimulates RNA-directed RNA polymerase NS5 guanylyltransferase activity.</text>
</comment>
<comment type="subunit">
    <molecule>Non-structural protein 4B</molecule>
    <text evidence="5">Interacts with serine protease NS3.</text>
</comment>
<comment type="subunit">
    <molecule>RNA-directed RNA polymerase NS5</molecule>
    <text evidence="6">Interacts with host STAT2; this interaction inhibits the phosphorylation of the latter, and, when all viral proteins are present (polyprotein), targets STAT2 for degradation.</text>
</comment>
<comment type="subcellular location">
    <molecule>Capsid protein C</molecule>
    <subcellularLocation>
        <location evidence="5">Virion</location>
    </subcellularLocation>
    <subcellularLocation>
        <location evidence="5">Host nucleus</location>
    </subcellularLocation>
    <subcellularLocation>
        <location evidence="5">Host cytoplasm</location>
        <location evidence="5">Host perinuclear region</location>
    </subcellularLocation>
    <subcellularLocation>
        <location evidence="5">Host cytoplasm</location>
    </subcellularLocation>
</comment>
<comment type="subcellular location">
    <molecule>Peptide pr</molecule>
    <subcellularLocation>
        <location evidence="5">Secreted</location>
    </subcellularLocation>
</comment>
<comment type="subcellular location">
    <molecule>Small envelope protein M</molecule>
    <subcellularLocation>
        <location evidence="1">Virion membrane</location>
        <topology evidence="1">Multi-pass membrane protein</topology>
    </subcellularLocation>
    <subcellularLocation>
        <location evidence="1">Host endoplasmic reticulum membrane</location>
        <topology evidence="10">Multi-pass membrane protein</topology>
    </subcellularLocation>
    <text evidence="1">ER membrane retention is mediated by the transmembrane domains.</text>
</comment>
<comment type="subcellular location">
    <molecule>Envelope protein E</molecule>
    <subcellularLocation>
        <location evidence="20">Virion membrane</location>
        <topology evidence="1">Multi-pass membrane protein</topology>
    </subcellularLocation>
    <subcellularLocation>
        <location evidence="1">Host endoplasmic reticulum membrane</location>
        <topology evidence="10">Multi-pass membrane protein</topology>
    </subcellularLocation>
    <text evidence="1">ER membrane retention is mediated by the transmembrane domains.</text>
</comment>
<comment type="subcellular location">
    <molecule>Non-structural protein 1</molecule>
    <subcellularLocation>
        <location evidence="5">Secreted</location>
    </subcellularLocation>
    <subcellularLocation>
        <location>Host endoplasmic reticulum membrane</location>
        <topology>Peripheral membrane protein</topology>
        <orientation evidence="5">Lumenal side</orientation>
    </subcellularLocation>
    <text evidence="9">Located in RE-derived vesicles hosting the replication complex.</text>
</comment>
<comment type="subcellular location">
    <molecule>Non-structural protein 2A</molecule>
    <subcellularLocation>
        <location evidence="3">Host endoplasmic reticulum membrane</location>
        <topology evidence="5">Multi-pass membrane protein</topology>
    </subcellularLocation>
</comment>
<comment type="subcellular location">
    <molecule>Serine protease subunit NS2B</molecule>
    <subcellularLocation>
        <location>Host endoplasmic reticulum membrane</location>
        <topology evidence="5">Multi-pass membrane protein</topology>
    </subcellularLocation>
</comment>
<comment type="subcellular location">
    <molecule>Serine protease NS3</molecule>
    <subcellularLocation>
        <location evidence="16">Host endoplasmic reticulum membrane</location>
        <topology evidence="16">Peripheral membrane protein</topology>
        <orientation evidence="16">Cytoplasmic side</orientation>
    </subcellularLocation>
    <text evidence="16">Remains non-covalently associated to serine protease subunit NS2B.</text>
</comment>
<comment type="subcellular location">
    <molecule>Non-structural protein 4A</molecule>
    <subcellularLocation>
        <location evidence="3">Host endoplasmic reticulum membrane</location>
        <topology evidence="5">Multi-pass membrane protein</topology>
    </subcellularLocation>
    <text evidence="5">Located in RE-associated vesicles hosting the replication complex.</text>
</comment>
<comment type="subcellular location">
    <molecule>Non-structural protein 4B</molecule>
    <subcellularLocation>
        <location evidence="5">Host endoplasmic reticulum membrane</location>
        <topology evidence="5">Multi-pass membrane protein</topology>
    </subcellularLocation>
    <text evidence="9">Located in RE-derived vesicles hosting the replication complex.</text>
</comment>
<comment type="subcellular location">
    <molecule>RNA-directed RNA polymerase NS5</molecule>
    <subcellularLocation>
        <location>Host endoplasmic reticulum membrane</location>
        <topology>Peripheral membrane protein</topology>
        <orientation>Cytoplasmic side</orientation>
    </subcellularLocation>
    <subcellularLocation>
        <location evidence="2">Host nucleus</location>
    </subcellularLocation>
    <text evidence="5">Located in RE-associated vesicles hosting the replication complex. NS5 protein is mainly localized in the nucleus rather than in ER vesicles.</text>
</comment>
<comment type="domain">
    <text evidence="5">The transmembrane domains of the small envelope protein M and envelope protein E contain an endoplasmic reticulum retention signal.</text>
</comment>
<comment type="PTM">
    <molecule>Genome polyprotein</molecule>
    <text evidence="5">Specific enzymatic cleavages in vivo yield mature proteins. Cleavages in the lumen of endoplasmic reticulum are performed by host signal peptidase, whereas cleavages in the cytoplasmic side are performed by serine protease NS3. Signal cleavage at the 2K-4B site requires a prior NS3 protease-mediated cleavage at the 4A-2K site.</text>
</comment>
<comment type="PTM">
    <molecule>Protein prM</molecule>
    <text evidence="5">Cleaved in post-Golgi vesicles by a host furin, releasing the mature small envelope protein M, and peptide pr. This cleavage is incomplete as up to 30% of viral particles still carry uncleaved prM.</text>
</comment>
<comment type="PTM">
    <molecule>Envelope protein E</molecule>
    <text evidence="5">N-glycosylated.</text>
</comment>
<comment type="PTM">
    <molecule>Non-structural protein 1</molecule>
    <text evidence="5">N-glycosylated. The excreted form is glycosylated and this is required for efficient secretion of the protein from infected cells.</text>
</comment>
<comment type="PTM">
    <molecule>Serine protease NS3</molecule>
    <text evidence="7">Acetylated by host KAT5. Acetylation modulates NS3 RNA-binding and unwinding activities and plays an important positive role for viral replication.</text>
</comment>
<comment type="PTM">
    <molecule>RNA-directed RNA polymerase NS5</molecule>
    <text evidence="5">Phosphorylated on serines residues. This phosphorylation may trigger NS5 nuclear localization.</text>
</comment>
<comment type="similarity">
    <text evidence="17">In the N-terminal section; belongs to the class I-like SAM-binding methyltransferase superfamily. mRNA cap 0-1 NS5-type methyltransferase family.</text>
</comment>
<reference key="1">
    <citation type="journal article" date="2003" name="Virology">
        <title>Analysis of the complete genome of the tick-borne flavivirus Omsk hemorrhagic fever virus.</title>
        <authorList>
            <person name="Lin D."/>
            <person name="Li L."/>
            <person name="Dick D."/>
            <person name="Shope R.E."/>
            <person name="Feldmann H."/>
            <person name="Barrett A.D."/>
            <person name="Holbrook M.R."/>
        </authorList>
    </citation>
    <scope>NUCLEOTIDE SEQUENCE [LARGE SCALE GENOMIC RNA]</scope>
    <source>
        <strain evidence="21">Bogoluvovska</strain>
    </source>
</reference>
<reference key="2">
    <citation type="journal article" date="2011" name="Virus Res.">
        <title>Construction of an infectious cDNA clone for Omsk hemorrhagic fever virus, and characterization of mutations in NS2A and NS5.</title>
        <authorList>
            <person name="Yoshii K."/>
            <person name="Igarashi M."/>
            <person name="Ito K."/>
            <person name="Kariwa H."/>
            <person name="Holbrook M.R."/>
            <person name="Takashima I."/>
        </authorList>
    </citation>
    <scope>MUTAGENESIS OF LEU-1174; LEU-2576 AND ASP-3347</scope>
</reference>
<evidence type="ECO:0000250" key="1">
    <source>
        <dbReference type="UniProtKB" id="P03314"/>
    </source>
</evidence>
<evidence type="ECO:0000250" key="2">
    <source>
        <dbReference type="UniProtKB" id="P06935"/>
    </source>
</evidence>
<evidence type="ECO:0000250" key="3">
    <source>
        <dbReference type="UniProtKB" id="P14335"/>
    </source>
</evidence>
<evidence type="ECO:0000250" key="4">
    <source>
        <dbReference type="UniProtKB" id="P14336"/>
    </source>
</evidence>
<evidence type="ECO:0000250" key="5">
    <source>
        <dbReference type="UniProtKB" id="P17763"/>
    </source>
</evidence>
<evidence type="ECO:0000250" key="6">
    <source>
        <dbReference type="UniProtKB" id="Q01299"/>
    </source>
</evidence>
<evidence type="ECO:0000250" key="7">
    <source>
        <dbReference type="UniProtKB" id="Q32ZE1"/>
    </source>
</evidence>
<evidence type="ECO:0000250" key="8">
    <source>
        <dbReference type="UniProtKB" id="Q6YMS4"/>
    </source>
</evidence>
<evidence type="ECO:0000250" key="9">
    <source>
        <dbReference type="UniProtKB" id="Q9Q6P4"/>
    </source>
</evidence>
<evidence type="ECO:0000255" key="10"/>
<evidence type="ECO:0000255" key="11">
    <source>
        <dbReference type="PROSITE-ProRule" id="PRU00498"/>
    </source>
</evidence>
<evidence type="ECO:0000255" key="12">
    <source>
        <dbReference type="PROSITE-ProRule" id="PRU00539"/>
    </source>
</evidence>
<evidence type="ECO:0000255" key="13">
    <source>
        <dbReference type="PROSITE-ProRule" id="PRU00541"/>
    </source>
</evidence>
<evidence type="ECO:0000255" key="14">
    <source>
        <dbReference type="PROSITE-ProRule" id="PRU00542"/>
    </source>
</evidence>
<evidence type="ECO:0000255" key="15">
    <source>
        <dbReference type="PROSITE-ProRule" id="PRU00859"/>
    </source>
</evidence>
<evidence type="ECO:0000255" key="16">
    <source>
        <dbReference type="PROSITE-ProRule" id="PRU00860"/>
    </source>
</evidence>
<evidence type="ECO:0000255" key="17">
    <source>
        <dbReference type="PROSITE-ProRule" id="PRU00924"/>
    </source>
</evidence>
<evidence type="ECO:0000256" key="18">
    <source>
        <dbReference type="SAM" id="MobiDB-lite"/>
    </source>
</evidence>
<evidence type="ECO:0000269" key="19">
    <source>
    </source>
</evidence>
<evidence type="ECO:0000305" key="20"/>
<evidence type="ECO:0000312" key="21">
    <source>
        <dbReference type="EMBL" id="AAP29989.1"/>
    </source>
</evidence>
<keyword id="KW-0007">Acetylation</keyword>
<keyword id="KW-1072">Activation of host autophagy by virus</keyword>
<keyword id="KW-0067">ATP-binding</keyword>
<keyword id="KW-0167">Capsid protein</keyword>
<keyword id="KW-0165">Cleavage on pair of basic residues</keyword>
<keyword id="KW-1015">Disulfide bond</keyword>
<keyword id="KW-1170">Fusion of virus membrane with host endosomal membrane</keyword>
<keyword id="KW-1168">Fusion of virus membrane with host membrane</keyword>
<keyword id="KW-0325">Glycoprotein</keyword>
<keyword id="KW-0347">Helicase</keyword>
<keyword id="KW-1035">Host cytoplasm</keyword>
<keyword id="KW-1038">Host endoplasmic reticulum</keyword>
<keyword id="KW-1043">Host membrane</keyword>
<keyword id="KW-1048">Host nucleus</keyword>
<keyword id="KW-0945">Host-virus interaction</keyword>
<keyword id="KW-0378">Hydrolase</keyword>
<keyword id="KW-1090">Inhibition of host innate immune response by virus</keyword>
<keyword id="KW-1114">Inhibition of host interferon signaling pathway by virus</keyword>
<keyword id="KW-1105">Inhibition of host STAT1 by virus</keyword>
<keyword id="KW-1106">Inhibition of host STAT2 by virus</keyword>
<keyword id="KW-0922">Interferon antiviral system evasion</keyword>
<keyword id="KW-0472">Membrane</keyword>
<keyword id="KW-0479">Metal-binding</keyword>
<keyword id="KW-0489">Methyltransferase</keyword>
<keyword id="KW-0506">mRNA capping</keyword>
<keyword id="KW-0507">mRNA processing</keyword>
<keyword id="KW-0547">Nucleotide-binding</keyword>
<keyword id="KW-0548">Nucleotidyltransferase</keyword>
<keyword id="KW-0597">Phosphoprotein</keyword>
<keyword id="KW-0645">Protease</keyword>
<keyword id="KW-0694">RNA-binding</keyword>
<keyword id="KW-0696">RNA-directed RNA polymerase</keyword>
<keyword id="KW-0949">S-adenosyl-L-methionine</keyword>
<keyword id="KW-0964">Secreted</keyword>
<keyword id="KW-0720">Serine protease</keyword>
<keyword id="KW-0941">Suppressor of RNA silencing</keyword>
<keyword id="KW-0808">Transferase</keyword>
<keyword id="KW-0812">Transmembrane</keyword>
<keyword id="KW-1133">Transmembrane helix</keyword>
<keyword id="KW-1161">Viral attachment to host cell</keyword>
<keyword id="KW-0899">Viral immunoevasion</keyword>
<keyword id="KW-1162">Viral penetration into host cytoplasm</keyword>
<keyword id="KW-0693">Viral RNA replication</keyword>
<keyword id="KW-0946">Virion</keyword>
<keyword id="KW-1160">Virus entry into host cell</keyword>
<keyword id="KW-0862">Zinc</keyword>
<organism>
    <name type="scientific">Omsk hemorrhagic fever virus</name>
    <name type="common">OHFV</name>
    <dbReference type="NCBI Taxonomy" id="12542"/>
    <lineage>
        <taxon>Viruses</taxon>
        <taxon>Riboviria</taxon>
        <taxon>Orthornavirae</taxon>
        <taxon>Kitrinoviricota</taxon>
        <taxon>Flasuviricetes</taxon>
        <taxon>Amarillovirales</taxon>
        <taxon>Flaviviridae</taxon>
        <taxon>Orthoflavivirus</taxon>
        <taxon>Orthoflavivirus omskense</taxon>
    </lineage>
</organism>
<name>POLG_OHFV</name>
<proteinExistence type="evidence at protein level"/>
<sequence length="3414" mass="378686">MAGKAILKGKGGGPPRRVSKETAKKTRQRVVQMPNGLVLKRIMEILWHAMVGTARSPLLKSFWKVVPLKQAMAALRKIKKAVSTLMIGLQKRGKRRSTTDWTGWLLVAMLLSIALAATVRKEGDGTTVIRAEGKDAATQVRVENGTCVILATDMGAWCEDSLSYECVTIDQGEEPVDVDCFCRNVDRVYLEYGRCGKQEGTRSRRSVLIPSHAQKDLTGRGQRWLEGDTIRSHLTRVEGWVWKNKSLTLAVVVIVWMTVESAVTRIVIVSALLCLAPAYASRCTHLENRDFVTGTQGTTRVTLVLELGGCVTITAEGKPSMDVWLDSIYQENPAKTREYCLHAKLSNTKVAARCPAMGPATLDEEHQSGTVCKRDQSDRGWGNHCGLFGKGSIVTCVKASCEAKKKATGHVYDANKIVYTVKVEPHTGNYVAANETHSGRKTALFTVSSEKTILTMGEYGDVSLMCRVASGVDLAQTVVLELDKTAEHLPTAWQVHRDWFNDLALPWKHEGMVGWNNAERLVEFGVPHAVKMDVYNLGDQTGVLLKSLAGAPLAHIEGTKYHLKSGHVTCEVGLEKLKMKGLTYTMCDKAKFTWKRAPTDSGHDTVVMEVAFSGTKPCRIPVRAVAHGSPDVDVAMLITPNPTIENNGGGFIEMQLPPGDNIIYVGELKHQWFQKGSSIGRVFQKTRKGIERLTVLGEHAWDFGSTGGFLSSIGKALHTVLGGAFNSVFGGVGFLPRILLGISLAWLGLNMRNPTMSMSFLLAGGLVLTMTLGVGADVGCAVDTERMELRCGEGLVVWREVSEWYDNYAFYPETPAALASALKEMVEEGDCGIVPQNRLEMAMWRSSVSELNLALAEGDANLTVVVDKHDPTDYRGGVPGLLKKGKDMKISWKSWGQSMIWSVPEAPRRFLVGTEGSSECPLAKRRTGVFTVAEFGMGLRTKVFLDFRQEITRECDTGVMGAAVKNGIAVHTDQSLWMKSIRNETGTYIVELLVTDLRNCSWPASHTIDNADVVDSELFLPASLAGPRSWYNRIPGYSEQVRGPWKYTPIKITREECPGTKVAIDASCDKRGASVRSTSESGKIIPEWCCRKCTLPPVTFRTGTDCWYAMEIRPVHDQGGLVRSMVVADNGELLSEGGIPGIVAVFVVLEYIIRKRPSAGLTVVWGGVVVLALLVTGMVTLQSMLRYVIAVGVTFHLELGPEIVALMLLQAVFELRVGLLGAFVLRRSLTTREVVTIYFLLLVLELGLPSANLEALWGWADALAMGAMIFRACTAEGKTGLGLLLVALMTQQNAVIVHQGLVIFLSVASACSVWKLLRGQREQKGLSWIVPLAGRLGGKGSGIRLLAFWELASRRDRRSFSEPLTVVGVMLTLASGMMRHTSQEALCALAAASFLLLMLVLGTRKMQLVAEWSGCVEWHPDLADEGGEISLRVRQDALGNFHLTELEKEERMMAFWLLAGLTASALHWTGILVVMGLWTMSEMLRSARRSDLVFSGQSGSERGSQPFEVRDGVYRILSPGLLWGHRQVGVGFGSKGVLHTMWHVTRGAAIFIDNAVAGPYWADVKEDVVCYGGAWSLEEKWKGEKVQVHAFPPGRAHEVHQCQPGELVLDTGRRIGAIPIDLAKGTSGSPILNAQGAVVGLYGNGLRTNETYVSSIAQGEVEKSRPNLPQAVVGTGWTSKGTITVLDMHPGSGKTHRVLPELIRQCIDKRLRTLVLAPTRVVLKEMERALSGKRVRFHSPAVGDQQTGNAIVDVMCHATYVNRRLLPQGRQNWEVAIMDEAHWTDPHSIAARGHLYSMAKENKCALVLMTATPPGKSEPFPESNGAITSEERQIPEGEWRDGFDWITEYEGRTAWFVPSIAKGGVIARTLRQKGKSVICLNSKTFEKDYSRVRDEKPDFVVTTDISEMGANLDVSRVIDGRTNIKPEEVDGKVELTGTRRVTTASAAQRRGRVGRHDGRTDEYIYSGQCDDDDSGLVQWKEAQILLDNITTLRGPVATFYGPEQDKMPEVAGHFRLTEERRKHFRHLLTHCDFTPWLAWHVAANVSNVTSRSWTWEGPEENAVDEANGDLVTFKSPNGAERTLRPVWRDARMFKEGRDIREFVAYASGRRSLGDMLTGMSGVPELLRHRCMSAMDVFYTLLYEEPGSRAMKMAERDAPEAFLTMVEMVVLGLATLGAVWCLVLRTSISRMMLGTMVLLVSLALLWAGGVGYGSMAGVALVFYTLLTVLQPEAGKQRSSDDNKLAYFLLTLCSLAGLVAANEMGFLEKTKADLSAVLWSEREEPRVWSEWTNIDIQPAKSWGTYVLVVSLFTPYIIHQLQTRIQQLVNSAVASGAQAMRDLGGGTPFFGVAGHVLTLGVVSLVGATPTSLVVGVGLAAFHLAIVVSGLEAELTQRAHKVFFSAMVRNPMVDGDVINPFGDGEVKPALYERKMSLILAMILCFMSVVLNRTVPAVTEASAVGLAAAGQLIRPEADTLWTMPVACGLSGVVRGSLWGFLPLGHRLWLRTSGTRRGGSEGDTLGDLWKRRLNNCTKEEFFAYRRTGILETERDKARELLKKGETNMGLAVSRGTAKLAWLEERGYVNLKGEVVDLGCGRGGWSYYAASRPAVMGVKAYTIGGKGHEVPRMVTSLGWNLIKFRAGMNVFTMQPHRADTVMCDIGESSPDAAIEGERTRKVILLMEQWKNRNPTAACVFKVLAPYRPEVIEALHRFQLQWGGGLVRTPFSRNSTHEMYYSTAISGNIVNSVNVQSRKLLARFGDQRGPIRVPEMDLGVGTRCVVLAEDKVKEHDVQERIKALQEQYSDTWHVDREHPYRTWQYWGSYRTAPTGSAASLINGVVKLLSWPWNAREDVVRMAMTDTTAFGQQRVFKDKVDTKAQEPQPGTRVIMRAVNDWMFERLARRSRPRMCSREEFIAKVKANAALGAWSDEQNKWASAKEAVEDPAFWHLVDEERERHLKGRCAHCVYNMMGKREKKLGEFGVAKGSRAIWYMWLGSRFLEFEALGFLNEDHWASRESSGAGVEGISLNYLGWHLKKLSLLEGGLFYADDTAGWDTRVTNADLEDEEQILRYMEGEHKQLAATVMQKAYHAKVVKVARPSRDGGCIMDVITRRDQRGSGQVVTYALNTLTNIKVQLIRMMEGEGVIEATDSHNPRLLRVERWLRDHGEERLGRMLISGDDCVVRPIDDRFSKALYFLNDMAKTRKDIGEWEHSAGFSSWEEVPFCSHHFHELVMKDGRTLVVPCRDQDELVGRARVSPGCGWSVRETACLSKAYGQMWLLSYFHRRDLRTLGFAICSAVPKDWVPTGRTTWSVHASGAWMTTENMLDVWNRVWILDNPFMENKEKVGEWRDIPYLPKSQDMMCSSLVGRRERAEWAKNIWGAVEKVRKMLGPERYSDYLSCMDRHELHWELKVESSII</sequence>
<dbReference type="EC" id="3.4.21.91"/>
<dbReference type="EC" id="3.6.1.15"/>
<dbReference type="EC" id="3.6.4.13"/>
<dbReference type="EC" id="2.1.1.56" evidence="17"/>
<dbReference type="EC" id="2.1.1.57" evidence="17"/>
<dbReference type="EC" id="2.7.7.48" evidence="12"/>
<dbReference type="EMBL" id="AY193805">
    <property type="protein sequence ID" value="AAP29989.1"/>
    <property type="molecule type" value="Genomic_RNA"/>
</dbReference>
<dbReference type="RefSeq" id="NP_878909.1">
    <property type="nucleotide sequence ID" value="NC_005062.1"/>
</dbReference>
<dbReference type="SMR" id="Q7T6D2"/>
<dbReference type="GeneID" id="2943111"/>
<dbReference type="KEGG" id="vg:2943111"/>
<dbReference type="Proteomes" id="UP000129388">
    <property type="component" value="Genome"/>
</dbReference>
<dbReference type="GO" id="GO:0005576">
    <property type="term" value="C:extracellular region"/>
    <property type="evidence" value="ECO:0007669"/>
    <property type="project" value="UniProtKB-SubCell"/>
</dbReference>
<dbReference type="GO" id="GO:0044167">
    <property type="term" value="C:host cell endoplasmic reticulum membrane"/>
    <property type="evidence" value="ECO:0007669"/>
    <property type="project" value="UniProtKB-SubCell"/>
</dbReference>
<dbReference type="GO" id="GO:0042025">
    <property type="term" value="C:host cell nucleus"/>
    <property type="evidence" value="ECO:0007669"/>
    <property type="project" value="UniProtKB-SubCell"/>
</dbReference>
<dbReference type="GO" id="GO:0044220">
    <property type="term" value="C:host cell perinuclear region of cytoplasm"/>
    <property type="evidence" value="ECO:0007669"/>
    <property type="project" value="UniProtKB-SubCell"/>
</dbReference>
<dbReference type="GO" id="GO:0016020">
    <property type="term" value="C:membrane"/>
    <property type="evidence" value="ECO:0007669"/>
    <property type="project" value="UniProtKB-KW"/>
</dbReference>
<dbReference type="GO" id="GO:0019028">
    <property type="term" value="C:viral capsid"/>
    <property type="evidence" value="ECO:0007669"/>
    <property type="project" value="UniProtKB-KW"/>
</dbReference>
<dbReference type="GO" id="GO:0055036">
    <property type="term" value="C:virion membrane"/>
    <property type="evidence" value="ECO:0007669"/>
    <property type="project" value="UniProtKB-SubCell"/>
</dbReference>
<dbReference type="GO" id="GO:0005524">
    <property type="term" value="F:ATP binding"/>
    <property type="evidence" value="ECO:0007669"/>
    <property type="project" value="UniProtKB-KW"/>
</dbReference>
<dbReference type="GO" id="GO:0016887">
    <property type="term" value="F:ATP hydrolysis activity"/>
    <property type="evidence" value="ECO:0007669"/>
    <property type="project" value="RHEA"/>
</dbReference>
<dbReference type="GO" id="GO:0003725">
    <property type="term" value="F:double-stranded RNA binding"/>
    <property type="evidence" value="ECO:0007669"/>
    <property type="project" value="InterPro"/>
</dbReference>
<dbReference type="GO" id="GO:0046872">
    <property type="term" value="F:metal ion binding"/>
    <property type="evidence" value="ECO:0007669"/>
    <property type="project" value="UniProtKB-KW"/>
</dbReference>
<dbReference type="GO" id="GO:0004483">
    <property type="term" value="F:mRNA (nucleoside-2'-O-)-methyltransferase activity"/>
    <property type="evidence" value="ECO:0007669"/>
    <property type="project" value="UniProtKB-EC"/>
</dbReference>
<dbReference type="GO" id="GO:0004482">
    <property type="term" value="F:mRNA 5'-cap (guanine-N7-)-methyltransferase activity"/>
    <property type="evidence" value="ECO:0007669"/>
    <property type="project" value="UniProtKB-EC"/>
</dbReference>
<dbReference type="GO" id="GO:0046983">
    <property type="term" value="F:protein dimerization activity"/>
    <property type="evidence" value="ECO:0007669"/>
    <property type="project" value="InterPro"/>
</dbReference>
<dbReference type="GO" id="GO:0003724">
    <property type="term" value="F:RNA helicase activity"/>
    <property type="evidence" value="ECO:0007669"/>
    <property type="project" value="UniProtKB-EC"/>
</dbReference>
<dbReference type="GO" id="GO:0003968">
    <property type="term" value="F:RNA-directed RNA polymerase activity"/>
    <property type="evidence" value="ECO:0007669"/>
    <property type="project" value="UniProtKB-KW"/>
</dbReference>
<dbReference type="GO" id="GO:0004252">
    <property type="term" value="F:serine-type endopeptidase activity"/>
    <property type="evidence" value="ECO:0007669"/>
    <property type="project" value="InterPro"/>
</dbReference>
<dbReference type="GO" id="GO:0005198">
    <property type="term" value="F:structural molecule activity"/>
    <property type="evidence" value="ECO:0007669"/>
    <property type="project" value="InterPro"/>
</dbReference>
<dbReference type="GO" id="GO:0039654">
    <property type="term" value="P:fusion of virus membrane with host endosome membrane"/>
    <property type="evidence" value="ECO:0007669"/>
    <property type="project" value="UniProtKB-KW"/>
</dbReference>
<dbReference type="GO" id="GO:0006508">
    <property type="term" value="P:proteolysis"/>
    <property type="evidence" value="ECO:0007669"/>
    <property type="project" value="UniProtKB-KW"/>
</dbReference>
<dbReference type="GO" id="GO:0046718">
    <property type="term" value="P:symbiont entry into host cell"/>
    <property type="evidence" value="ECO:0007669"/>
    <property type="project" value="UniProtKB-KW"/>
</dbReference>
<dbReference type="GO" id="GO:0039520">
    <property type="term" value="P:symbiont-mediated activation of host autophagy"/>
    <property type="evidence" value="ECO:0007669"/>
    <property type="project" value="UniProtKB-KW"/>
</dbReference>
<dbReference type="GO" id="GO:0052170">
    <property type="term" value="P:symbiont-mediated suppression of host innate immune response"/>
    <property type="evidence" value="ECO:0007669"/>
    <property type="project" value="UniProtKB-KW"/>
</dbReference>
<dbReference type="GO" id="GO:0039563">
    <property type="term" value="P:symbiont-mediated suppression of host JAK-STAT cascade via inhibition of STAT1 activity"/>
    <property type="evidence" value="ECO:0007669"/>
    <property type="project" value="UniProtKB-KW"/>
</dbReference>
<dbReference type="GO" id="GO:0039564">
    <property type="term" value="P:symbiont-mediated suppression of host JAK-STAT cascade via inhibition of STAT2 activity"/>
    <property type="evidence" value="ECO:0007669"/>
    <property type="project" value="UniProtKB-KW"/>
</dbReference>
<dbReference type="GO" id="GO:0039502">
    <property type="term" value="P:symbiont-mediated suppression of host type I interferon-mediated signaling pathway"/>
    <property type="evidence" value="ECO:0007669"/>
    <property type="project" value="UniProtKB-KW"/>
</dbReference>
<dbReference type="GO" id="GO:0039694">
    <property type="term" value="P:viral RNA genome replication"/>
    <property type="evidence" value="ECO:0007669"/>
    <property type="project" value="InterPro"/>
</dbReference>
<dbReference type="GO" id="GO:0019062">
    <property type="term" value="P:virion attachment to host cell"/>
    <property type="evidence" value="ECO:0007669"/>
    <property type="project" value="UniProtKB-KW"/>
</dbReference>
<dbReference type="CDD" id="cd20761">
    <property type="entry name" value="capping_2-OMTase_Flaviviridae"/>
    <property type="match status" value="1"/>
</dbReference>
<dbReference type="CDD" id="cd17931">
    <property type="entry name" value="DEXHc_viral_Ns3"/>
    <property type="match status" value="1"/>
</dbReference>
<dbReference type="CDD" id="cd12149">
    <property type="entry name" value="Flavi_E_C"/>
    <property type="match status" value="1"/>
</dbReference>
<dbReference type="CDD" id="cd17038">
    <property type="entry name" value="Flavi_M"/>
    <property type="match status" value="1"/>
</dbReference>
<dbReference type="CDD" id="cd23204">
    <property type="entry name" value="Flavivirus_RdRp"/>
    <property type="match status" value="1"/>
</dbReference>
<dbReference type="FunFam" id="1.20.1280.260:FF:000001">
    <property type="entry name" value="Envelope glycoprotein"/>
    <property type="match status" value="1"/>
</dbReference>
<dbReference type="FunFam" id="2.40.10.120:FF:000016">
    <property type="entry name" value="Genome polyprotein"/>
    <property type="match status" value="1"/>
</dbReference>
<dbReference type="FunFam" id="3.30.70.2840:FF:000002">
    <property type="entry name" value="Genome polyprotein"/>
    <property type="match status" value="1"/>
</dbReference>
<dbReference type="FunFam" id="3.30.70.2840:FF:000004">
    <property type="entry name" value="Genome polyprotein"/>
    <property type="match status" value="1"/>
</dbReference>
<dbReference type="Gene3D" id="1.10.260.90">
    <property type="match status" value="1"/>
</dbReference>
<dbReference type="Gene3D" id="1.20.1280.260">
    <property type="match status" value="1"/>
</dbReference>
<dbReference type="Gene3D" id="2.40.10.120">
    <property type="match status" value="1"/>
</dbReference>
<dbReference type="Gene3D" id="2.60.40.350">
    <property type="match status" value="1"/>
</dbReference>
<dbReference type="Gene3D" id="1.10.8.970">
    <property type="entry name" value="Flavivirus envelope glycoprotein M-like"/>
    <property type="match status" value="1"/>
</dbReference>
<dbReference type="Gene3D" id="2.60.260.50">
    <property type="entry name" value="Flavivirus polyprotein propeptide domain"/>
    <property type="match status" value="1"/>
</dbReference>
<dbReference type="Gene3D" id="3.30.70.2840">
    <property type="entry name" value="Flavivirus RNA-directed RNA polymerase, thumb domain"/>
    <property type="match status" value="3"/>
</dbReference>
<dbReference type="Gene3D" id="3.40.50.300">
    <property type="entry name" value="P-loop containing nucleotide triphosphate hydrolases"/>
    <property type="match status" value="2"/>
</dbReference>
<dbReference type="Gene3D" id="2.60.98.10">
    <property type="entry name" value="Tick-borne Encephalitis virus Glycoprotein, domain 1"/>
    <property type="match status" value="1"/>
</dbReference>
<dbReference type="Gene3D" id="3.40.50.150">
    <property type="entry name" value="Vaccinia Virus protein VP39"/>
    <property type="match status" value="1"/>
</dbReference>
<dbReference type="Gene3D" id="3.30.67.10">
    <property type="entry name" value="Viral Envelope Glycoprotein, domain 2"/>
    <property type="match status" value="1"/>
</dbReference>
<dbReference type="Gene3D" id="3.30.387.10">
    <property type="entry name" value="Viral Envelope Glycoprotein, domain 3"/>
    <property type="match status" value="1"/>
</dbReference>
<dbReference type="InterPro" id="IPR043502">
    <property type="entry name" value="DNA/RNA_pol_sf"/>
</dbReference>
<dbReference type="InterPro" id="IPR000069">
    <property type="entry name" value="Env_glycoprot_M_flavivir"/>
</dbReference>
<dbReference type="InterPro" id="IPR038302">
    <property type="entry name" value="Env_glycoprot_M_sf_flavivir"/>
</dbReference>
<dbReference type="InterPro" id="IPR013755">
    <property type="entry name" value="Flav_gly_cen_dom_subdom1"/>
</dbReference>
<dbReference type="InterPro" id="IPR001122">
    <property type="entry name" value="Flavi_capsidC"/>
</dbReference>
<dbReference type="InterPro" id="IPR011492">
    <property type="entry name" value="Flavi_DEAD"/>
</dbReference>
<dbReference type="InterPro" id="IPR027287">
    <property type="entry name" value="Flavi_E_Ig-like"/>
</dbReference>
<dbReference type="InterPro" id="IPR026470">
    <property type="entry name" value="Flavi_E_Stem/Anchor_dom"/>
</dbReference>
<dbReference type="InterPro" id="IPR038345">
    <property type="entry name" value="Flavi_E_Stem/Anchor_dom_sf"/>
</dbReference>
<dbReference type="InterPro" id="IPR011998">
    <property type="entry name" value="Flavi_Glycoprot_E_cen/dimer"/>
</dbReference>
<dbReference type="InterPro" id="IPR001157">
    <property type="entry name" value="Flavi_NS1"/>
</dbReference>
<dbReference type="InterPro" id="IPR000752">
    <property type="entry name" value="Flavi_NS2A"/>
</dbReference>
<dbReference type="InterPro" id="IPR000487">
    <property type="entry name" value="Flavi_NS2B"/>
</dbReference>
<dbReference type="InterPro" id="IPR001850">
    <property type="entry name" value="Flavi_NS3_S7"/>
</dbReference>
<dbReference type="InterPro" id="IPR000404">
    <property type="entry name" value="Flavi_NS4A"/>
</dbReference>
<dbReference type="InterPro" id="IPR001528">
    <property type="entry name" value="Flavi_NS4B"/>
</dbReference>
<dbReference type="InterPro" id="IPR046811">
    <property type="entry name" value="Flavi_NS5_thumb"/>
</dbReference>
<dbReference type="InterPro" id="IPR002535">
    <property type="entry name" value="Flavi_propep"/>
</dbReference>
<dbReference type="InterPro" id="IPR038688">
    <property type="entry name" value="Flavi_propep_sf"/>
</dbReference>
<dbReference type="InterPro" id="IPR047530">
    <property type="entry name" value="Flavi_RdRp"/>
</dbReference>
<dbReference type="InterPro" id="IPR000208">
    <property type="entry name" value="Flavi_RdRp_fingers/palm"/>
</dbReference>
<dbReference type="InterPro" id="IPR000336">
    <property type="entry name" value="Flavivir/Alphavir_Ig-like_sf"/>
</dbReference>
<dbReference type="InterPro" id="IPR014412">
    <property type="entry name" value="Gen_Poly_FLV"/>
</dbReference>
<dbReference type="InterPro" id="IPR036253">
    <property type="entry name" value="Glycoprot_cen/dimer_sf"/>
</dbReference>
<dbReference type="InterPro" id="IPR038055">
    <property type="entry name" value="Glycoprot_E_dimer_dom"/>
</dbReference>
<dbReference type="InterPro" id="IPR013756">
    <property type="entry name" value="GlyE_cen_dom_subdom2"/>
</dbReference>
<dbReference type="InterPro" id="IPR014001">
    <property type="entry name" value="Helicase_ATP-bd"/>
</dbReference>
<dbReference type="InterPro" id="IPR001650">
    <property type="entry name" value="Helicase_C-like"/>
</dbReference>
<dbReference type="InterPro" id="IPR014756">
    <property type="entry name" value="Ig_E-set"/>
</dbReference>
<dbReference type="InterPro" id="IPR026490">
    <property type="entry name" value="mRNA_cap_0/1_MeTrfase"/>
</dbReference>
<dbReference type="InterPro" id="IPR049486">
    <property type="entry name" value="NS3-hel_C_flaviviridae"/>
</dbReference>
<dbReference type="InterPro" id="IPR027417">
    <property type="entry name" value="P-loop_NTPase"/>
</dbReference>
<dbReference type="InterPro" id="IPR009003">
    <property type="entry name" value="Peptidase_S1_PA"/>
</dbReference>
<dbReference type="InterPro" id="IPR007094">
    <property type="entry name" value="RNA-dir_pol_PSvirus"/>
</dbReference>
<dbReference type="InterPro" id="IPR002877">
    <property type="entry name" value="RNA_MeTrfase_FtsJ_dom"/>
</dbReference>
<dbReference type="InterPro" id="IPR029063">
    <property type="entry name" value="SAM-dependent_MTases_sf"/>
</dbReference>
<dbReference type="NCBIfam" id="TIGR04240">
    <property type="entry name" value="flavi_E_stem"/>
    <property type="match status" value="1"/>
</dbReference>
<dbReference type="Pfam" id="PF20907">
    <property type="entry name" value="Flav_NS3-hel_C"/>
    <property type="match status" value="1"/>
</dbReference>
<dbReference type="Pfam" id="PF01003">
    <property type="entry name" value="Flavi_capsid"/>
    <property type="match status" value="1"/>
</dbReference>
<dbReference type="Pfam" id="PF07652">
    <property type="entry name" value="Flavi_DEAD"/>
    <property type="match status" value="1"/>
</dbReference>
<dbReference type="Pfam" id="PF21659">
    <property type="entry name" value="Flavi_E_stem"/>
    <property type="match status" value="1"/>
</dbReference>
<dbReference type="Pfam" id="PF02832">
    <property type="entry name" value="Flavi_glycop_C"/>
    <property type="match status" value="1"/>
</dbReference>
<dbReference type="Pfam" id="PF00869">
    <property type="entry name" value="Flavi_glycoprot"/>
    <property type="match status" value="1"/>
</dbReference>
<dbReference type="Pfam" id="PF01004">
    <property type="entry name" value="Flavi_M"/>
    <property type="match status" value="1"/>
</dbReference>
<dbReference type="Pfam" id="PF00948">
    <property type="entry name" value="Flavi_NS1"/>
    <property type="match status" value="1"/>
</dbReference>
<dbReference type="Pfam" id="PF01005">
    <property type="entry name" value="Flavi_NS2A"/>
    <property type="match status" value="1"/>
</dbReference>
<dbReference type="Pfam" id="PF01350">
    <property type="entry name" value="Flavi_NS4A"/>
    <property type="match status" value="1"/>
</dbReference>
<dbReference type="Pfam" id="PF01349">
    <property type="entry name" value="Flavi_NS4B"/>
    <property type="match status" value="1"/>
</dbReference>
<dbReference type="Pfam" id="PF00972">
    <property type="entry name" value="Flavi_NS5"/>
    <property type="match status" value="1"/>
</dbReference>
<dbReference type="Pfam" id="PF20483">
    <property type="entry name" value="Flavi_NS5_thumb"/>
    <property type="match status" value="1"/>
</dbReference>
<dbReference type="Pfam" id="PF01570">
    <property type="entry name" value="Flavi_propep"/>
    <property type="match status" value="1"/>
</dbReference>
<dbReference type="Pfam" id="PF01728">
    <property type="entry name" value="FtsJ"/>
    <property type="match status" value="1"/>
</dbReference>
<dbReference type="Pfam" id="PF00949">
    <property type="entry name" value="Peptidase_S7"/>
    <property type="match status" value="1"/>
</dbReference>
<dbReference type="PIRSF" id="PIRSF003817">
    <property type="entry name" value="Gen_Poly_FLV"/>
    <property type="match status" value="1"/>
</dbReference>
<dbReference type="SMART" id="SM00487">
    <property type="entry name" value="DEXDc"/>
    <property type="match status" value="1"/>
</dbReference>
<dbReference type="SMART" id="SM00490">
    <property type="entry name" value="HELICc"/>
    <property type="match status" value="1"/>
</dbReference>
<dbReference type="SUPFAM" id="SSF56672">
    <property type="entry name" value="DNA/RNA polymerases"/>
    <property type="match status" value="1"/>
</dbReference>
<dbReference type="SUPFAM" id="SSF81296">
    <property type="entry name" value="E set domains"/>
    <property type="match status" value="1"/>
</dbReference>
<dbReference type="SUPFAM" id="SSF52540">
    <property type="entry name" value="P-loop containing nucleoside triphosphate hydrolases"/>
    <property type="match status" value="2"/>
</dbReference>
<dbReference type="SUPFAM" id="SSF53335">
    <property type="entry name" value="S-adenosyl-L-methionine-dependent methyltransferases"/>
    <property type="match status" value="1"/>
</dbReference>
<dbReference type="SUPFAM" id="SSF50494">
    <property type="entry name" value="Trypsin-like serine proteases"/>
    <property type="match status" value="1"/>
</dbReference>
<dbReference type="SUPFAM" id="SSF56983">
    <property type="entry name" value="Viral glycoprotein, central and dimerisation domains"/>
    <property type="match status" value="1"/>
</dbReference>
<dbReference type="PROSITE" id="PS51527">
    <property type="entry name" value="FLAVIVIRUS_NS2B"/>
    <property type="match status" value="1"/>
</dbReference>
<dbReference type="PROSITE" id="PS51528">
    <property type="entry name" value="FLAVIVIRUS_NS3PRO"/>
    <property type="match status" value="1"/>
</dbReference>
<dbReference type="PROSITE" id="PS51192">
    <property type="entry name" value="HELICASE_ATP_BIND_1"/>
    <property type="match status" value="1"/>
</dbReference>
<dbReference type="PROSITE" id="PS51194">
    <property type="entry name" value="HELICASE_CTER"/>
    <property type="match status" value="1"/>
</dbReference>
<dbReference type="PROSITE" id="PS50507">
    <property type="entry name" value="RDRP_SSRNA_POS"/>
    <property type="match status" value="1"/>
</dbReference>
<dbReference type="PROSITE" id="PS51591">
    <property type="entry name" value="RNA_CAP01_NS5_MT"/>
    <property type="match status" value="1"/>
</dbReference>